<evidence type="ECO:0000255" key="1">
    <source>
        <dbReference type="HAMAP-Rule" id="MF_01368"/>
    </source>
</evidence>
<evidence type="ECO:0000305" key="2"/>
<organism>
    <name type="scientific">Francisella tularensis subsp. holarctica (strain FTNF002-00 / FTA)</name>
    <dbReference type="NCBI Taxonomy" id="458234"/>
    <lineage>
        <taxon>Bacteria</taxon>
        <taxon>Pseudomonadati</taxon>
        <taxon>Pseudomonadota</taxon>
        <taxon>Gammaproteobacteria</taxon>
        <taxon>Thiotrichales</taxon>
        <taxon>Francisellaceae</taxon>
        <taxon>Francisella</taxon>
    </lineage>
</organism>
<dbReference type="EMBL" id="CP000803">
    <property type="protein sequence ID" value="ABU60753.1"/>
    <property type="molecule type" value="Genomic_DNA"/>
</dbReference>
<dbReference type="RefSeq" id="WP_003014382.1">
    <property type="nucleotide sequence ID" value="NC_009749.1"/>
</dbReference>
<dbReference type="SMR" id="A7N9V0"/>
<dbReference type="GeneID" id="75264235"/>
<dbReference type="KEGG" id="fta:FTA_0276"/>
<dbReference type="HOGENOM" id="CLU_074407_2_0_6"/>
<dbReference type="GO" id="GO:0022625">
    <property type="term" value="C:cytosolic large ribosomal subunit"/>
    <property type="evidence" value="ECO:0007669"/>
    <property type="project" value="TreeGrafter"/>
</dbReference>
<dbReference type="GO" id="GO:0003735">
    <property type="term" value="F:structural constituent of ribosome"/>
    <property type="evidence" value="ECO:0007669"/>
    <property type="project" value="InterPro"/>
</dbReference>
<dbReference type="GO" id="GO:0006412">
    <property type="term" value="P:translation"/>
    <property type="evidence" value="ECO:0007669"/>
    <property type="project" value="UniProtKB-UniRule"/>
</dbReference>
<dbReference type="Gene3D" id="3.90.1030.10">
    <property type="entry name" value="Ribosomal protein L17"/>
    <property type="match status" value="1"/>
</dbReference>
<dbReference type="HAMAP" id="MF_01368">
    <property type="entry name" value="Ribosomal_bL17"/>
    <property type="match status" value="1"/>
</dbReference>
<dbReference type="InterPro" id="IPR000456">
    <property type="entry name" value="Ribosomal_bL17"/>
</dbReference>
<dbReference type="InterPro" id="IPR047859">
    <property type="entry name" value="Ribosomal_bL17_CS"/>
</dbReference>
<dbReference type="InterPro" id="IPR036373">
    <property type="entry name" value="Ribosomal_bL17_sf"/>
</dbReference>
<dbReference type="NCBIfam" id="TIGR00059">
    <property type="entry name" value="L17"/>
    <property type="match status" value="1"/>
</dbReference>
<dbReference type="PANTHER" id="PTHR14413:SF16">
    <property type="entry name" value="LARGE RIBOSOMAL SUBUNIT PROTEIN BL17M"/>
    <property type="match status" value="1"/>
</dbReference>
<dbReference type="PANTHER" id="PTHR14413">
    <property type="entry name" value="RIBOSOMAL PROTEIN L17"/>
    <property type="match status" value="1"/>
</dbReference>
<dbReference type="Pfam" id="PF01196">
    <property type="entry name" value="Ribosomal_L17"/>
    <property type="match status" value="1"/>
</dbReference>
<dbReference type="SUPFAM" id="SSF64263">
    <property type="entry name" value="Prokaryotic ribosomal protein L17"/>
    <property type="match status" value="1"/>
</dbReference>
<dbReference type="PROSITE" id="PS01167">
    <property type="entry name" value="RIBOSOMAL_L17"/>
    <property type="match status" value="1"/>
</dbReference>
<feature type="chain" id="PRO_1000055828" description="Large ribosomal subunit protein bL17">
    <location>
        <begin position="1"/>
        <end position="145"/>
    </location>
</feature>
<keyword id="KW-0687">Ribonucleoprotein</keyword>
<keyword id="KW-0689">Ribosomal protein</keyword>
<protein>
    <recommendedName>
        <fullName evidence="1">Large ribosomal subunit protein bL17</fullName>
    </recommendedName>
    <alternativeName>
        <fullName evidence="2">50S ribosomal protein L17</fullName>
    </alternativeName>
</protein>
<name>RL17_FRATF</name>
<sequence length="145" mass="16784">MRHRKQGRKFGRTSSHRKAMFKNMSASLINHELIKTTLPKAKELRTIVEPLVTLAKREHKLRQELDTNSNEFKAQSVALRRQAFDFLRNKAAVTKLFEEFGARYAERAGGYTRILKCGYRFGDKAPMAFIELVDRPQVEEAADEE</sequence>
<comment type="subunit">
    <text evidence="1">Part of the 50S ribosomal subunit. Contacts protein L32.</text>
</comment>
<comment type="similarity">
    <text evidence="1">Belongs to the bacterial ribosomal protein bL17 family.</text>
</comment>
<gene>
    <name evidence="1" type="primary">rplQ</name>
    <name type="ordered locus">FTA_0276</name>
</gene>
<proteinExistence type="inferred from homology"/>
<reference key="1">
    <citation type="journal article" date="2009" name="PLoS ONE">
        <title>Complete genome sequence of Francisella tularensis subspecies holarctica FTNF002-00.</title>
        <authorList>
            <person name="Barabote R.D."/>
            <person name="Xie G."/>
            <person name="Brettin T.S."/>
            <person name="Hinrichs S.H."/>
            <person name="Fey P.D."/>
            <person name="Jay J.J."/>
            <person name="Engle J.L."/>
            <person name="Godbole S.D."/>
            <person name="Noronha J.M."/>
            <person name="Scheuermann R.H."/>
            <person name="Zhou L.W."/>
            <person name="Lion C."/>
            <person name="Dempsey M.P."/>
        </authorList>
    </citation>
    <scope>NUCLEOTIDE SEQUENCE [LARGE SCALE GENOMIC DNA]</scope>
    <source>
        <strain>FTNF002-00 / FTA</strain>
    </source>
</reference>
<accession>A7N9V0</accession>